<keyword id="KW-0997">Cell inner membrane</keyword>
<keyword id="KW-1003">Cell membrane</keyword>
<keyword id="KW-0472">Membrane</keyword>
<keyword id="KW-1185">Reference proteome</keyword>
<keyword id="KW-0812">Transmembrane</keyword>
<keyword id="KW-1133">Transmembrane helix</keyword>
<protein>
    <recommendedName>
        <fullName evidence="1">UPF0060 membrane protein YnfA</fullName>
    </recommendedName>
</protein>
<name>YNFA_SHIFL</name>
<reference key="1">
    <citation type="journal article" date="2002" name="Nucleic Acids Res.">
        <title>Genome sequence of Shigella flexneri 2a: insights into pathogenicity through comparison with genomes of Escherichia coli K12 and O157.</title>
        <authorList>
            <person name="Jin Q."/>
            <person name="Yuan Z."/>
            <person name="Xu J."/>
            <person name="Wang Y."/>
            <person name="Shen Y."/>
            <person name="Lu W."/>
            <person name="Wang J."/>
            <person name="Liu H."/>
            <person name="Yang J."/>
            <person name="Yang F."/>
            <person name="Zhang X."/>
            <person name="Zhang J."/>
            <person name="Yang G."/>
            <person name="Wu H."/>
            <person name="Qu D."/>
            <person name="Dong J."/>
            <person name="Sun L."/>
            <person name="Xue Y."/>
            <person name="Zhao A."/>
            <person name="Gao Y."/>
            <person name="Zhu J."/>
            <person name="Kan B."/>
            <person name="Ding K."/>
            <person name="Chen S."/>
            <person name="Cheng H."/>
            <person name="Yao Z."/>
            <person name="He B."/>
            <person name="Chen R."/>
            <person name="Ma D."/>
            <person name="Qiang B."/>
            <person name="Wen Y."/>
            <person name="Hou Y."/>
            <person name="Yu J."/>
        </authorList>
    </citation>
    <scope>NUCLEOTIDE SEQUENCE [LARGE SCALE GENOMIC DNA]</scope>
    <source>
        <strain>301 / Serotype 2a</strain>
    </source>
</reference>
<reference key="2">
    <citation type="journal article" date="2003" name="Infect. Immun.">
        <title>Complete genome sequence and comparative genomics of Shigella flexneri serotype 2a strain 2457T.</title>
        <authorList>
            <person name="Wei J."/>
            <person name="Goldberg M.B."/>
            <person name="Burland V."/>
            <person name="Venkatesan M.M."/>
            <person name="Deng W."/>
            <person name="Fournier G."/>
            <person name="Mayhew G.F."/>
            <person name="Plunkett G. III"/>
            <person name="Rose D.J."/>
            <person name="Darling A."/>
            <person name="Mau B."/>
            <person name="Perna N.T."/>
            <person name="Payne S.M."/>
            <person name="Runyen-Janecky L.J."/>
            <person name="Zhou S."/>
            <person name="Schwartz D.C."/>
            <person name="Blattner F.R."/>
        </authorList>
    </citation>
    <scope>NUCLEOTIDE SEQUENCE [LARGE SCALE GENOMIC DNA]</scope>
    <source>
        <strain>ATCC 700930 / 2457T / Serotype 2a</strain>
    </source>
</reference>
<organism>
    <name type="scientific">Shigella flexneri</name>
    <dbReference type="NCBI Taxonomy" id="623"/>
    <lineage>
        <taxon>Bacteria</taxon>
        <taxon>Pseudomonadati</taxon>
        <taxon>Pseudomonadota</taxon>
        <taxon>Gammaproteobacteria</taxon>
        <taxon>Enterobacterales</taxon>
        <taxon>Enterobacteriaceae</taxon>
        <taxon>Shigella</taxon>
    </lineage>
</organism>
<feature type="chain" id="PRO_0000162345" description="UPF0060 membrane protein YnfA">
    <location>
        <begin position="1"/>
        <end position="108"/>
    </location>
</feature>
<feature type="topological domain" description="Periplasmic" evidence="1">
    <location>
        <begin position="1"/>
        <end position="5"/>
    </location>
</feature>
<feature type="transmembrane region" description="Helical" evidence="1">
    <location>
        <begin position="6"/>
        <end position="26"/>
    </location>
</feature>
<feature type="topological domain" description="Cytoplasmic" evidence="1">
    <location>
        <begin position="27"/>
        <end position="30"/>
    </location>
</feature>
<feature type="transmembrane region" description="Helical" evidence="1">
    <location>
        <begin position="31"/>
        <end position="51"/>
    </location>
</feature>
<feature type="topological domain" description="Periplasmic" evidence="1">
    <location>
        <begin position="52"/>
        <end position="60"/>
    </location>
</feature>
<feature type="transmembrane region" description="Helical" evidence="1">
    <location>
        <begin position="61"/>
        <end position="81"/>
    </location>
</feature>
<feature type="topological domain" description="Cytoplasmic" evidence="1">
    <location>
        <begin position="82"/>
        <end position="84"/>
    </location>
</feature>
<feature type="transmembrane region" description="Helical" evidence="1">
    <location>
        <begin position="85"/>
        <end position="105"/>
    </location>
</feature>
<feature type="topological domain" description="Periplasmic" evidence="1">
    <location>
        <begin position="106"/>
        <end position="108"/>
    </location>
</feature>
<accession>Q83L10</accession>
<accession>Q7UCG3</accession>
<dbReference type="EMBL" id="AE005674">
    <property type="protein sequence ID" value="AAN43178.2"/>
    <property type="molecule type" value="Genomic_DNA"/>
</dbReference>
<dbReference type="EMBL" id="AE014073">
    <property type="protein sequence ID" value="AAP17070.1"/>
    <property type="molecule type" value="Genomic_DNA"/>
</dbReference>
<dbReference type="RefSeq" id="NP_707471.2">
    <property type="nucleotide sequence ID" value="NC_004337.2"/>
</dbReference>
<dbReference type="RefSeq" id="WP_001295395.1">
    <property type="nucleotide sequence ID" value="NZ_WPGW01000117.1"/>
</dbReference>
<dbReference type="SMR" id="Q83L10"/>
<dbReference type="STRING" id="198214.SF1592"/>
<dbReference type="PaxDb" id="198214-SF1592"/>
<dbReference type="GeneID" id="1024787"/>
<dbReference type="KEGG" id="sfl:SF1592"/>
<dbReference type="KEGG" id="sfx:S1719"/>
<dbReference type="PATRIC" id="fig|198214.7.peg.1883"/>
<dbReference type="HOGENOM" id="CLU_117653_2_1_6"/>
<dbReference type="Proteomes" id="UP000001006">
    <property type="component" value="Chromosome"/>
</dbReference>
<dbReference type="Proteomes" id="UP000002673">
    <property type="component" value="Chromosome"/>
</dbReference>
<dbReference type="GO" id="GO:0005886">
    <property type="term" value="C:plasma membrane"/>
    <property type="evidence" value="ECO:0007669"/>
    <property type="project" value="UniProtKB-SubCell"/>
</dbReference>
<dbReference type="HAMAP" id="MF_00010">
    <property type="entry name" value="UPF0060"/>
    <property type="match status" value="1"/>
</dbReference>
<dbReference type="InterPro" id="IPR003844">
    <property type="entry name" value="UPF0060"/>
</dbReference>
<dbReference type="NCBIfam" id="NF002586">
    <property type="entry name" value="PRK02237.1"/>
    <property type="match status" value="1"/>
</dbReference>
<dbReference type="PANTHER" id="PTHR36116">
    <property type="entry name" value="UPF0060 MEMBRANE PROTEIN YNFA"/>
    <property type="match status" value="1"/>
</dbReference>
<dbReference type="PANTHER" id="PTHR36116:SF1">
    <property type="entry name" value="UPF0060 MEMBRANE PROTEIN YNFA"/>
    <property type="match status" value="1"/>
</dbReference>
<dbReference type="Pfam" id="PF02694">
    <property type="entry name" value="UPF0060"/>
    <property type="match status" value="1"/>
</dbReference>
<dbReference type="SUPFAM" id="SSF103481">
    <property type="entry name" value="Multidrug resistance efflux transporter EmrE"/>
    <property type="match status" value="1"/>
</dbReference>
<sequence>MIKTTLLFFATALCEIIGCFLPWLWLKRNASIWLLLPAGISLALFVWLLTLHPAASGRVYAAYGGVYVCTALMWLRVVDGVKLSLYDWTGALIALCGMLIIVAGWGRT</sequence>
<gene>
    <name evidence="1" type="primary">ynfA</name>
    <name type="ordered locus">SF1592</name>
    <name type="ordered locus">S1719</name>
</gene>
<proteinExistence type="inferred from homology"/>
<comment type="subcellular location">
    <subcellularLocation>
        <location evidence="1">Cell inner membrane</location>
        <topology evidence="1">Multi-pass membrane protein</topology>
    </subcellularLocation>
</comment>
<comment type="similarity">
    <text evidence="1">Belongs to the UPF0060 family.</text>
</comment>
<evidence type="ECO:0000255" key="1">
    <source>
        <dbReference type="HAMAP-Rule" id="MF_00010"/>
    </source>
</evidence>